<gene>
    <name type="ordered locus">LBL_1291</name>
</gene>
<accession>Q052F7</accession>
<reference key="1">
    <citation type="journal article" date="2006" name="Proc. Natl. Acad. Sci. U.S.A.">
        <title>Genome reduction in Leptospira borgpetersenii reflects limited transmission potential.</title>
        <authorList>
            <person name="Bulach D.M."/>
            <person name="Zuerner R.L."/>
            <person name="Wilson P."/>
            <person name="Seemann T."/>
            <person name="McGrath A."/>
            <person name="Cullen P.A."/>
            <person name="Davis J."/>
            <person name="Johnson M."/>
            <person name="Kuczek E."/>
            <person name="Alt D.P."/>
            <person name="Peterson-Burch B."/>
            <person name="Coppel R.L."/>
            <person name="Rood J.I."/>
            <person name="Davies J.K."/>
            <person name="Adler B."/>
        </authorList>
    </citation>
    <scope>NUCLEOTIDE SEQUENCE [LARGE SCALE GENOMIC DNA]</scope>
    <source>
        <strain>L550</strain>
    </source>
</reference>
<feature type="chain" id="PRO_1000130693" description="UPF0235 protein LBL_1291">
    <location>
        <begin position="1"/>
        <end position="73"/>
    </location>
</feature>
<dbReference type="EMBL" id="CP000348">
    <property type="protein sequence ID" value="ABJ78788.1"/>
    <property type="molecule type" value="Genomic_DNA"/>
</dbReference>
<dbReference type="RefSeq" id="WP_011670017.1">
    <property type="nucleotide sequence ID" value="NC_008508.1"/>
</dbReference>
<dbReference type="SMR" id="Q052F7"/>
<dbReference type="KEGG" id="lbl:LBL_1291"/>
<dbReference type="HOGENOM" id="CLU_130694_5_3_12"/>
<dbReference type="GO" id="GO:0005737">
    <property type="term" value="C:cytoplasm"/>
    <property type="evidence" value="ECO:0007669"/>
    <property type="project" value="TreeGrafter"/>
</dbReference>
<dbReference type="Gene3D" id="3.30.1200.10">
    <property type="entry name" value="YggU-like"/>
    <property type="match status" value="1"/>
</dbReference>
<dbReference type="HAMAP" id="MF_00634">
    <property type="entry name" value="UPF0235"/>
    <property type="match status" value="1"/>
</dbReference>
<dbReference type="InterPro" id="IPR003746">
    <property type="entry name" value="DUF167"/>
</dbReference>
<dbReference type="InterPro" id="IPR036591">
    <property type="entry name" value="YggU-like_sf"/>
</dbReference>
<dbReference type="NCBIfam" id="TIGR00251">
    <property type="entry name" value="DUF167 family protein"/>
    <property type="match status" value="1"/>
</dbReference>
<dbReference type="PANTHER" id="PTHR13420">
    <property type="entry name" value="UPF0235 PROTEIN C15ORF40"/>
    <property type="match status" value="1"/>
</dbReference>
<dbReference type="PANTHER" id="PTHR13420:SF7">
    <property type="entry name" value="UPF0235 PROTEIN C15ORF40"/>
    <property type="match status" value="1"/>
</dbReference>
<dbReference type="Pfam" id="PF02594">
    <property type="entry name" value="DUF167"/>
    <property type="match status" value="1"/>
</dbReference>
<dbReference type="SMART" id="SM01152">
    <property type="entry name" value="DUF167"/>
    <property type="match status" value="1"/>
</dbReference>
<dbReference type="SUPFAM" id="SSF69786">
    <property type="entry name" value="YggU-like"/>
    <property type="match status" value="1"/>
</dbReference>
<comment type="similarity">
    <text evidence="1">Belongs to the UPF0235 family.</text>
</comment>
<protein>
    <recommendedName>
        <fullName evidence="1">UPF0235 protein LBL_1291</fullName>
    </recommendedName>
</protein>
<evidence type="ECO:0000255" key="1">
    <source>
        <dbReference type="HAMAP-Rule" id="MF_00634"/>
    </source>
</evidence>
<organism>
    <name type="scientific">Leptospira borgpetersenii serovar Hardjo-bovis (strain L550)</name>
    <dbReference type="NCBI Taxonomy" id="355276"/>
    <lineage>
        <taxon>Bacteria</taxon>
        <taxon>Pseudomonadati</taxon>
        <taxon>Spirochaetota</taxon>
        <taxon>Spirochaetia</taxon>
        <taxon>Leptospirales</taxon>
        <taxon>Leptospiraceae</taxon>
        <taxon>Leptospira</taxon>
    </lineage>
</organism>
<proteinExistence type="inferred from homology"/>
<name>Y1291_LEPBL</name>
<sequence length="73" mass="8326">MKFTVRVKPNSKKIFFRKEEDGSVTIAVREPALEGKANEAVIETISREMKIPKRKIRIVSGEKGKKKTIEIDP</sequence>